<keyword id="KW-1003">Cell membrane</keyword>
<keyword id="KW-0472">Membrane</keyword>
<keyword id="KW-1185">Reference proteome</keyword>
<keyword id="KW-0812">Transmembrane</keyword>
<keyword id="KW-1133">Transmembrane helix</keyword>
<sequence length="123" mass="13686">MFMKQLVKHLIIAGFSAAILSFLISFDAVYTGFSSSFGGTLSHFFIHSFLLIGLPLALFTDAVHRILHLKRTHTLFTKLGLYATVVYVSWDSAVWLAAAMAVYFLIECAFFPVGRAKETTISM</sequence>
<dbReference type="EMBL" id="Z93936">
    <property type="protein sequence ID" value="CAB07931.1"/>
    <property type="molecule type" value="Genomic_DNA"/>
</dbReference>
<dbReference type="EMBL" id="AL009126">
    <property type="protein sequence ID" value="CAB15123.1"/>
    <property type="molecule type" value="Genomic_DNA"/>
</dbReference>
<dbReference type="PIR" id="C70011">
    <property type="entry name" value="C70011"/>
</dbReference>
<dbReference type="RefSeq" id="NP_391012.1">
    <property type="nucleotide sequence ID" value="NC_000964.3"/>
</dbReference>
<dbReference type="RefSeq" id="WP_010886601.1">
    <property type="nucleotide sequence ID" value="NZ_OZ025638.1"/>
</dbReference>
<dbReference type="FunCoup" id="O05245">
    <property type="interactions" value="28"/>
</dbReference>
<dbReference type="STRING" id="224308.BSU31340"/>
<dbReference type="PaxDb" id="224308-BSU31340"/>
<dbReference type="EnsemblBacteria" id="CAB15123">
    <property type="protein sequence ID" value="CAB15123"/>
    <property type="gene ID" value="BSU_31340"/>
</dbReference>
<dbReference type="GeneID" id="937159"/>
<dbReference type="KEGG" id="bsu:BSU31340"/>
<dbReference type="PATRIC" id="fig|224308.43.peg.3281"/>
<dbReference type="InParanoid" id="O05245"/>
<dbReference type="OrthoDB" id="2912246at2"/>
<dbReference type="BioCyc" id="BSUB:BSU31340-MONOMER"/>
<dbReference type="Proteomes" id="UP000001570">
    <property type="component" value="Chromosome"/>
</dbReference>
<dbReference type="GO" id="GO:0005886">
    <property type="term" value="C:plasma membrane"/>
    <property type="evidence" value="ECO:0007669"/>
    <property type="project" value="UniProtKB-SubCell"/>
</dbReference>
<name>YUGM_BACSU</name>
<reference key="1">
    <citation type="journal article" date="1997" name="Microbiology">
        <title>Analysis of the Bacillus subtilis genome: cloning and nucleotide sequence of a 62 kb region between 275 degrees (rrnB) and 284 degrees (pai).</title>
        <authorList>
            <person name="Oudega B."/>
            <person name="Koningstein G."/>
            <person name="Rodrigues L."/>
            <person name="de Sales Ramon M."/>
            <person name="Hilbert H."/>
            <person name="Duesterhoeft A."/>
            <person name="Pohl T.M."/>
            <person name="Weitzenegger T."/>
        </authorList>
    </citation>
    <scope>NUCLEOTIDE SEQUENCE [GENOMIC DNA]</scope>
    <source>
        <strain>168</strain>
    </source>
</reference>
<reference key="2">
    <citation type="journal article" date="1997" name="Nature">
        <title>The complete genome sequence of the Gram-positive bacterium Bacillus subtilis.</title>
        <authorList>
            <person name="Kunst F."/>
            <person name="Ogasawara N."/>
            <person name="Moszer I."/>
            <person name="Albertini A.M."/>
            <person name="Alloni G."/>
            <person name="Azevedo V."/>
            <person name="Bertero M.G."/>
            <person name="Bessieres P."/>
            <person name="Bolotin A."/>
            <person name="Borchert S."/>
            <person name="Borriss R."/>
            <person name="Boursier L."/>
            <person name="Brans A."/>
            <person name="Braun M."/>
            <person name="Brignell S.C."/>
            <person name="Bron S."/>
            <person name="Brouillet S."/>
            <person name="Bruschi C.V."/>
            <person name="Caldwell B."/>
            <person name="Capuano V."/>
            <person name="Carter N.M."/>
            <person name="Choi S.-K."/>
            <person name="Codani J.-J."/>
            <person name="Connerton I.F."/>
            <person name="Cummings N.J."/>
            <person name="Daniel R.A."/>
            <person name="Denizot F."/>
            <person name="Devine K.M."/>
            <person name="Duesterhoeft A."/>
            <person name="Ehrlich S.D."/>
            <person name="Emmerson P.T."/>
            <person name="Entian K.-D."/>
            <person name="Errington J."/>
            <person name="Fabret C."/>
            <person name="Ferrari E."/>
            <person name="Foulger D."/>
            <person name="Fritz C."/>
            <person name="Fujita M."/>
            <person name="Fujita Y."/>
            <person name="Fuma S."/>
            <person name="Galizzi A."/>
            <person name="Galleron N."/>
            <person name="Ghim S.-Y."/>
            <person name="Glaser P."/>
            <person name="Goffeau A."/>
            <person name="Golightly E.J."/>
            <person name="Grandi G."/>
            <person name="Guiseppi G."/>
            <person name="Guy B.J."/>
            <person name="Haga K."/>
            <person name="Haiech J."/>
            <person name="Harwood C.R."/>
            <person name="Henaut A."/>
            <person name="Hilbert H."/>
            <person name="Holsappel S."/>
            <person name="Hosono S."/>
            <person name="Hullo M.-F."/>
            <person name="Itaya M."/>
            <person name="Jones L.-M."/>
            <person name="Joris B."/>
            <person name="Karamata D."/>
            <person name="Kasahara Y."/>
            <person name="Klaerr-Blanchard M."/>
            <person name="Klein C."/>
            <person name="Kobayashi Y."/>
            <person name="Koetter P."/>
            <person name="Koningstein G."/>
            <person name="Krogh S."/>
            <person name="Kumano M."/>
            <person name="Kurita K."/>
            <person name="Lapidus A."/>
            <person name="Lardinois S."/>
            <person name="Lauber J."/>
            <person name="Lazarevic V."/>
            <person name="Lee S.-M."/>
            <person name="Levine A."/>
            <person name="Liu H."/>
            <person name="Masuda S."/>
            <person name="Mauel C."/>
            <person name="Medigue C."/>
            <person name="Medina N."/>
            <person name="Mellado R.P."/>
            <person name="Mizuno M."/>
            <person name="Moestl D."/>
            <person name="Nakai S."/>
            <person name="Noback M."/>
            <person name="Noone D."/>
            <person name="O'Reilly M."/>
            <person name="Ogawa K."/>
            <person name="Ogiwara A."/>
            <person name="Oudega B."/>
            <person name="Park S.-H."/>
            <person name="Parro V."/>
            <person name="Pohl T.M."/>
            <person name="Portetelle D."/>
            <person name="Porwollik S."/>
            <person name="Prescott A.M."/>
            <person name="Presecan E."/>
            <person name="Pujic P."/>
            <person name="Purnelle B."/>
            <person name="Rapoport G."/>
            <person name="Rey M."/>
            <person name="Reynolds S."/>
            <person name="Rieger M."/>
            <person name="Rivolta C."/>
            <person name="Rocha E."/>
            <person name="Roche B."/>
            <person name="Rose M."/>
            <person name="Sadaie Y."/>
            <person name="Sato T."/>
            <person name="Scanlan E."/>
            <person name="Schleich S."/>
            <person name="Schroeter R."/>
            <person name="Scoffone F."/>
            <person name="Sekiguchi J."/>
            <person name="Sekowska A."/>
            <person name="Seror S.J."/>
            <person name="Serror P."/>
            <person name="Shin B.-S."/>
            <person name="Soldo B."/>
            <person name="Sorokin A."/>
            <person name="Tacconi E."/>
            <person name="Takagi T."/>
            <person name="Takahashi H."/>
            <person name="Takemaru K."/>
            <person name="Takeuchi M."/>
            <person name="Tamakoshi A."/>
            <person name="Tanaka T."/>
            <person name="Terpstra P."/>
            <person name="Tognoni A."/>
            <person name="Tosato V."/>
            <person name="Uchiyama S."/>
            <person name="Vandenbol M."/>
            <person name="Vannier F."/>
            <person name="Vassarotti A."/>
            <person name="Viari A."/>
            <person name="Wambutt R."/>
            <person name="Wedler E."/>
            <person name="Wedler H."/>
            <person name="Weitzenegger T."/>
            <person name="Winters P."/>
            <person name="Wipat A."/>
            <person name="Yamamoto H."/>
            <person name="Yamane K."/>
            <person name="Yasumoto K."/>
            <person name="Yata K."/>
            <person name="Yoshida K."/>
            <person name="Yoshikawa H.-F."/>
            <person name="Zumstein E."/>
            <person name="Yoshikawa H."/>
            <person name="Danchin A."/>
        </authorList>
    </citation>
    <scope>NUCLEOTIDE SEQUENCE [LARGE SCALE GENOMIC DNA]</scope>
    <source>
        <strain>168</strain>
    </source>
</reference>
<evidence type="ECO:0000255" key="1"/>
<evidence type="ECO:0000305" key="2"/>
<gene>
    <name type="primary">yugM</name>
    <name type="ordered locus">BSU31340</name>
</gene>
<feature type="chain" id="PRO_0000049919" description="Uncharacterized protein YugM">
    <location>
        <begin position="1"/>
        <end position="123"/>
    </location>
</feature>
<feature type="transmembrane region" description="Helical" evidence="1">
    <location>
        <begin position="7"/>
        <end position="29"/>
    </location>
</feature>
<feature type="transmembrane region" description="Helical" evidence="1">
    <location>
        <begin position="44"/>
        <end position="66"/>
    </location>
</feature>
<feature type="transmembrane region" description="Helical" evidence="1">
    <location>
        <begin position="79"/>
        <end position="101"/>
    </location>
</feature>
<organism>
    <name type="scientific">Bacillus subtilis (strain 168)</name>
    <dbReference type="NCBI Taxonomy" id="224308"/>
    <lineage>
        <taxon>Bacteria</taxon>
        <taxon>Bacillati</taxon>
        <taxon>Bacillota</taxon>
        <taxon>Bacilli</taxon>
        <taxon>Bacillales</taxon>
        <taxon>Bacillaceae</taxon>
        <taxon>Bacillus</taxon>
    </lineage>
</organism>
<proteinExistence type="predicted"/>
<comment type="subcellular location">
    <subcellularLocation>
        <location evidence="2">Cell membrane</location>
        <topology evidence="2">Multi-pass membrane protein</topology>
    </subcellularLocation>
</comment>
<accession>O05245</accession>
<protein>
    <recommendedName>
        <fullName>Uncharacterized protein YugM</fullName>
    </recommendedName>
</protein>